<sequence length="83" mass="9361">MKTGIHPDYAPVVFRDLASGATFLTRSTVSSQKTIEWEDGSTYPVIDVEISSESHPFYTGKQRILDSAGRVEKFNTRYKNFGK</sequence>
<evidence type="ECO:0000255" key="1">
    <source>
        <dbReference type="HAMAP-Rule" id="MF_00502"/>
    </source>
</evidence>
<evidence type="ECO:0000305" key="2"/>
<accession>Q6AF19</accession>
<protein>
    <recommendedName>
        <fullName evidence="1">Large ribosomal subunit protein bL31B</fullName>
    </recommendedName>
    <alternativeName>
        <fullName evidence="2">50S ribosomal protein L31 type B</fullName>
    </alternativeName>
</protein>
<feature type="chain" id="PRO_0000173233" description="Large ribosomal subunit protein bL31B">
    <location>
        <begin position="1"/>
        <end position="83"/>
    </location>
</feature>
<keyword id="KW-1185">Reference proteome</keyword>
<keyword id="KW-0687">Ribonucleoprotein</keyword>
<keyword id="KW-0689">Ribosomal protein</keyword>
<comment type="subunit">
    <text evidence="1">Part of the 50S ribosomal subunit.</text>
</comment>
<comment type="similarity">
    <text evidence="1">Belongs to the bacterial ribosomal protein bL31 family. Type B subfamily.</text>
</comment>
<name>RL31B_LEIXX</name>
<organism>
    <name type="scientific">Leifsonia xyli subsp. xyli (strain CTCB07)</name>
    <dbReference type="NCBI Taxonomy" id="281090"/>
    <lineage>
        <taxon>Bacteria</taxon>
        <taxon>Bacillati</taxon>
        <taxon>Actinomycetota</taxon>
        <taxon>Actinomycetes</taxon>
        <taxon>Micrococcales</taxon>
        <taxon>Microbacteriaceae</taxon>
        <taxon>Leifsonia</taxon>
    </lineage>
</organism>
<proteinExistence type="inferred from homology"/>
<dbReference type="EMBL" id="AE016822">
    <property type="protein sequence ID" value="AAT89026.1"/>
    <property type="molecule type" value="Genomic_DNA"/>
</dbReference>
<dbReference type="RefSeq" id="WP_011186022.1">
    <property type="nucleotide sequence ID" value="NC_006087.1"/>
</dbReference>
<dbReference type="SMR" id="Q6AF19"/>
<dbReference type="STRING" id="281090.Lxx11800"/>
<dbReference type="KEGG" id="lxx:Lxx11800"/>
<dbReference type="eggNOG" id="COG0254">
    <property type="taxonomic scope" value="Bacteria"/>
</dbReference>
<dbReference type="HOGENOM" id="CLU_114306_2_2_11"/>
<dbReference type="Proteomes" id="UP000001306">
    <property type="component" value="Chromosome"/>
</dbReference>
<dbReference type="GO" id="GO:1990904">
    <property type="term" value="C:ribonucleoprotein complex"/>
    <property type="evidence" value="ECO:0007669"/>
    <property type="project" value="UniProtKB-KW"/>
</dbReference>
<dbReference type="GO" id="GO:0005840">
    <property type="term" value="C:ribosome"/>
    <property type="evidence" value="ECO:0007669"/>
    <property type="project" value="UniProtKB-KW"/>
</dbReference>
<dbReference type="GO" id="GO:0003735">
    <property type="term" value="F:structural constituent of ribosome"/>
    <property type="evidence" value="ECO:0007669"/>
    <property type="project" value="InterPro"/>
</dbReference>
<dbReference type="GO" id="GO:0006412">
    <property type="term" value="P:translation"/>
    <property type="evidence" value="ECO:0007669"/>
    <property type="project" value="UniProtKB-UniRule"/>
</dbReference>
<dbReference type="Gene3D" id="4.10.830.30">
    <property type="entry name" value="Ribosomal protein L31"/>
    <property type="match status" value="1"/>
</dbReference>
<dbReference type="HAMAP" id="MF_00502">
    <property type="entry name" value="Ribosomal_bL31_2"/>
    <property type="match status" value="1"/>
</dbReference>
<dbReference type="InterPro" id="IPR034704">
    <property type="entry name" value="Ribosomal_bL28/bL31-like_sf"/>
</dbReference>
<dbReference type="InterPro" id="IPR002150">
    <property type="entry name" value="Ribosomal_bL31"/>
</dbReference>
<dbReference type="InterPro" id="IPR027493">
    <property type="entry name" value="Ribosomal_bL31_B"/>
</dbReference>
<dbReference type="InterPro" id="IPR042105">
    <property type="entry name" value="Ribosomal_bL31_sf"/>
</dbReference>
<dbReference type="NCBIfam" id="TIGR00105">
    <property type="entry name" value="L31"/>
    <property type="match status" value="1"/>
</dbReference>
<dbReference type="NCBIfam" id="NF002462">
    <property type="entry name" value="PRK01678.1"/>
    <property type="match status" value="1"/>
</dbReference>
<dbReference type="PANTHER" id="PTHR33280">
    <property type="entry name" value="50S RIBOSOMAL PROTEIN L31, CHLOROPLASTIC"/>
    <property type="match status" value="1"/>
</dbReference>
<dbReference type="PANTHER" id="PTHR33280:SF1">
    <property type="entry name" value="LARGE RIBOSOMAL SUBUNIT PROTEIN BL31C"/>
    <property type="match status" value="1"/>
</dbReference>
<dbReference type="Pfam" id="PF01197">
    <property type="entry name" value="Ribosomal_L31"/>
    <property type="match status" value="1"/>
</dbReference>
<dbReference type="PRINTS" id="PR01249">
    <property type="entry name" value="RIBOSOMALL31"/>
</dbReference>
<dbReference type="SUPFAM" id="SSF143800">
    <property type="entry name" value="L28p-like"/>
    <property type="match status" value="1"/>
</dbReference>
<dbReference type="PROSITE" id="PS01143">
    <property type="entry name" value="RIBOSOMAL_L31"/>
    <property type="match status" value="1"/>
</dbReference>
<gene>
    <name evidence="1" type="primary">rpmE2</name>
    <name type="synonym">rpmE</name>
    <name type="ordered locus">Lxx11800</name>
</gene>
<reference key="1">
    <citation type="journal article" date="2004" name="Mol. Plant Microbe Interact.">
        <title>The genome sequence of the Gram-positive sugarcane pathogen Leifsonia xyli subsp. xyli.</title>
        <authorList>
            <person name="Monteiro-Vitorello C.B."/>
            <person name="Camargo L.E.A."/>
            <person name="Van Sluys M.A."/>
            <person name="Kitajima J.P."/>
            <person name="Truffi D."/>
            <person name="do Amaral A.M."/>
            <person name="Harakava R."/>
            <person name="de Oliveira J.C.F."/>
            <person name="Wood D."/>
            <person name="de Oliveira M.C."/>
            <person name="Miyaki C.Y."/>
            <person name="Takita M.A."/>
            <person name="da Silva A.C.R."/>
            <person name="Furlan L.R."/>
            <person name="Carraro D.M."/>
            <person name="Camarotte G."/>
            <person name="Almeida N.F. Jr."/>
            <person name="Carrer H."/>
            <person name="Coutinho L.L."/>
            <person name="El-Dorry H.A."/>
            <person name="Ferro M.I.T."/>
            <person name="Gagliardi P.R."/>
            <person name="Giglioti E."/>
            <person name="Goldman M.H.S."/>
            <person name="Goldman G.H."/>
            <person name="Kimura E.T."/>
            <person name="Ferro E.S."/>
            <person name="Kuramae E.E."/>
            <person name="Lemos E.G.M."/>
            <person name="Lemos M.V.F."/>
            <person name="Mauro S.M.Z."/>
            <person name="Machado M.A."/>
            <person name="Marino C.L."/>
            <person name="Menck C.F."/>
            <person name="Nunes L.R."/>
            <person name="Oliveira R.C."/>
            <person name="Pereira G.G."/>
            <person name="Siqueira W."/>
            <person name="de Souza A.A."/>
            <person name="Tsai S.M."/>
            <person name="Zanca A.S."/>
            <person name="Simpson A.J.G."/>
            <person name="Brumbley S.M."/>
            <person name="Setubal J.C."/>
        </authorList>
    </citation>
    <scope>NUCLEOTIDE SEQUENCE [LARGE SCALE GENOMIC DNA]</scope>
    <source>
        <strain>CTCB07</strain>
    </source>
</reference>